<name>EXPL3_DICDI</name>
<proteinExistence type="evidence at transcript level"/>
<dbReference type="EMBL" id="AAFI02000014">
    <property type="protein sequence ID" value="EAL69290.1"/>
    <property type="molecule type" value="Genomic_DNA"/>
</dbReference>
<dbReference type="RefSeq" id="XP_643217.1">
    <property type="nucleotide sequence ID" value="XM_638125.1"/>
</dbReference>
<dbReference type="SMR" id="Q7KWS2"/>
<dbReference type="STRING" id="44689.Q7KWS2"/>
<dbReference type="GlyCosmos" id="Q7KWS2">
    <property type="glycosylation" value="1 site, No reported glycans"/>
</dbReference>
<dbReference type="GlyGen" id="Q7KWS2">
    <property type="glycosylation" value="1 site"/>
</dbReference>
<dbReference type="PaxDb" id="44689-DDB0231632"/>
<dbReference type="EnsemblProtists" id="EAL69290">
    <property type="protein sequence ID" value="EAL69290"/>
    <property type="gene ID" value="DDB_G0276287"/>
</dbReference>
<dbReference type="GeneID" id="8620421"/>
<dbReference type="KEGG" id="ddi:DDB_G0276287"/>
<dbReference type="dictyBase" id="DDB_G0276287">
    <property type="gene designation" value="expl3"/>
</dbReference>
<dbReference type="VEuPathDB" id="AmoebaDB:DDB_G0276287"/>
<dbReference type="eggNOG" id="ENOG502S9SU">
    <property type="taxonomic scope" value="Eukaryota"/>
</dbReference>
<dbReference type="HOGENOM" id="CLU_071727_0_0_1"/>
<dbReference type="InParanoid" id="Q7KWS2"/>
<dbReference type="OMA" id="ECKGANL"/>
<dbReference type="PhylomeDB" id="Q7KWS2"/>
<dbReference type="PRO" id="PR:Q7KWS2"/>
<dbReference type="Proteomes" id="UP000002195">
    <property type="component" value="Chromosome 2"/>
</dbReference>
<dbReference type="GO" id="GO:0016020">
    <property type="term" value="C:membrane"/>
    <property type="evidence" value="ECO:0007669"/>
    <property type="project" value="UniProtKB-SubCell"/>
</dbReference>
<dbReference type="GO" id="GO:0030248">
    <property type="term" value="F:cellulose binding"/>
    <property type="evidence" value="ECO:0000314"/>
    <property type="project" value="dictyBase"/>
</dbReference>
<dbReference type="GO" id="GO:0031153">
    <property type="term" value="P:slug development involved in sorocarp development"/>
    <property type="evidence" value="ECO:0000315"/>
    <property type="project" value="dictyBase"/>
</dbReference>
<dbReference type="GO" id="GO:0036360">
    <property type="term" value="P:sorocarp stalk morphogenesis"/>
    <property type="evidence" value="ECO:0000315"/>
    <property type="project" value="dictyBase"/>
</dbReference>
<dbReference type="CDD" id="cd22271">
    <property type="entry name" value="DPBB_EXP_N-like"/>
    <property type="match status" value="1"/>
</dbReference>
<dbReference type="Gene3D" id="2.60.40.760">
    <property type="entry name" value="Expansin, cellulose-binding-like domain"/>
    <property type="match status" value="1"/>
</dbReference>
<dbReference type="Gene3D" id="2.40.40.10">
    <property type="entry name" value="RlpA-like domain"/>
    <property type="match status" value="1"/>
</dbReference>
<dbReference type="InterPro" id="IPR007112">
    <property type="entry name" value="Expansin/allergen_DPBB_dom"/>
</dbReference>
<dbReference type="InterPro" id="IPR036749">
    <property type="entry name" value="Expansin_CBD_sf"/>
</dbReference>
<dbReference type="InterPro" id="IPR051477">
    <property type="entry name" value="Expansin_CellWall"/>
</dbReference>
<dbReference type="InterPro" id="IPR049818">
    <property type="entry name" value="Expansin_EXLX1-like"/>
</dbReference>
<dbReference type="InterPro" id="IPR009009">
    <property type="entry name" value="RlpA-like_DPBB"/>
</dbReference>
<dbReference type="InterPro" id="IPR036908">
    <property type="entry name" value="RlpA-like_sf"/>
</dbReference>
<dbReference type="NCBIfam" id="NF041144">
    <property type="entry name" value="expansin_EXLX1"/>
    <property type="match status" value="1"/>
</dbReference>
<dbReference type="PANTHER" id="PTHR31836">
    <property type="match status" value="1"/>
</dbReference>
<dbReference type="PANTHER" id="PTHR31836:SF2">
    <property type="entry name" value="EXPANSIN-LIKE PROTEIN 3-RELATED"/>
    <property type="match status" value="1"/>
</dbReference>
<dbReference type="Pfam" id="PF03330">
    <property type="entry name" value="DPBB_1"/>
    <property type="match status" value="1"/>
</dbReference>
<dbReference type="SMART" id="SM00837">
    <property type="entry name" value="DPBB_1"/>
    <property type="match status" value="1"/>
</dbReference>
<dbReference type="SUPFAM" id="SSF50685">
    <property type="entry name" value="Barwin-like endoglucanases"/>
    <property type="match status" value="1"/>
</dbReference>
<dbReference type="SUPFAM" id="SSF49590">
    <property type="entry name" value="PHL pollen allergen"/>
    <property type="match status" value="1"/>
</dbReference>
<dbReference type="PROSITE" id="PS50842">
    <property type="entry name" value="EXPANSIN_EG45"/>
    <property type="match status" value="1"/>
</dbReference>
<feature type="signal peptide" evidence="1">
    <location>
        <begin position="1"/>
        <end position="20"/>
    </location>
</feature>
<feature type="chain" id="PRO_0000368217" description="Expansin-like protein 3">
    <location>
        <begin position="21"/>
        <end position="335"/>
    </location>
</feature>
<feature type="topological domain" description="Extracellular" evidence="1">
    <location>
        <begin position="21"/>
        <end position="314"/>
    </location>
</feature>
<feature type="transmembrane region" description="Helical" evidence="1">
    <location>
        <begin position="315"/>
        <end position="335"/>
    </location>
</feature>
<feature type="domain" description="Expansin-like EG45" evidence="2">
    <location>
        <begin position="43"/>
        <end position="143"/>
    </location>
</feature>
<feature type="region of interest" description="Disordered" evidence="3">
    <location>
        <begin position="247"/>
        <end position="276"/>
    </location>
</feature>
<feature type="compositionally biased region" description="Low complexity" evidence="3">
    <location>
        <begin position="249"/>
        <end position="272"/>
    </location>
</feature>
<feature type="glycosylation site" description="N-linked (GlcNAc...) asparagine" evidence="1">
    <location>
        <position position="87"/>
    </location>
</feature>
<feature type="disulfide bond" evidence="2">
    <location>
        <begin position="46"/>
        <end position="76"/>
    </location>
</feature>
<feature type="disulfide bond" evidence="2">
    <location>
        <begin position="79"/>
        <end position="138"/>
    </location>
</feature>
<keyword id="KW-1015">Disulfide bond</keyword>
<keyword id="KW-0325">Glycoprotein</keyword>
<keyword id="KW-0472">Membrane</keyword>
<keyword id="KW-1185">Reference proteome</keyword>
<keyword id="KW-0732">Signal</keyword>
<keyword id="KW-0812">Transmembrane</keyword>
<keyword id="KW-1133">Transmembrane helix</keyword>
<sequence length="335" mass="37104">MKFNTIFLVLSIVKFILISAQSCPFSQSIINGASATFYTAIDAGNCGFEKLNGPLGPGNYMIAALGSKLYQNGAQCGQCFKISNSKNASVTVMATDSCHDAGYCQRDNHFDLSPAAFSILGPQSQGVLDGLSYVKVPCEVSGNVKIMMKDGSNDFWTSFFVFNSKVIIKQVSIKLSNSNQFVPLSQTTYNYWPTSITGGQFHVRIESIGGEFIYVTIPKVESRKVYETSGQFSTSCSNLNENNPINYKPQTFNSQQTSNNQNSNTQTPTKQPSPNSQNFIPSYCQQYIQKPNYIFAKESKEMLVLNENENIESNSLKLLPNFLLLILIILLNINF</sequence>
<evidence type="ECO:0000255" key="1"/>
<evidence type="ECO:0000255" key="2">
    <source>
        <dbReference type="PROSITE-ProRule" id="PRU00079"/>
    </source>
</evidence>
<evidence type="ECO:0000256" key="3">
    <source>
        <dbReference type="SAM" id="MobiDB-lite"/>
    </source>
</evidence>
<evidence type="ECO:0000269" key="4">
    <source>
    </source>
</evidence>
<evidence type="ECO:0000269" key="5">
    <source>
    </source>
</evidence>
<evidence type="ECO:0000305" key="6"/>
<reference key="1">
    <citation type="journal article" date="2002" name="Nature">
        <title>Sequence and analysis of chromosome 2 of Dictyostelium discoideum.</title>
        <authorList>
            <person name="Gloeckner G."/>
            <person name="Eichinger L."/>
            <person name="Szafranski K."/>
            <person name="Pachebat J.A."/>
            <person name="Bankier A.T."/>
            <person name="Dear P.H."/>
            <person name="Lehmann R."/>
            <person name="Baumgart C."/>
            <person name="Parra G."/>
            <person name="Abril J.F."/>
            <person name="Guigo R."/>
            <person name="Kumpf K."/>
            <person name="Tunggal B."/>
            <person name="Cox E.C."/>
            <person name="Quail M.A."/>
            <person name="Platzer M."/>
            <person name="Rosenthal A."/>
            <person name="Noegel A.A."/>
        </authorList>
    </citation>
    <scope>NUCLEOTIDE SEQUENCE [LARGE SCALE GENOMIC DNA]</scope>
    <source>
        <strain>AX4</strain>
    </source>
</reference>
<reference key="2">
    <citation type="journal article" date="2005" name="Nature">
        <title>The genome of the social amoeba Dictyostelium discoideum.</title>
        <authorList>
            <person name="Eichinger L."/>
            <person name="Pachebat J.A."/>
            <person name="Gloeckner G."/>
            <person name="Rajandream M.A."/>
            <person name="Sucgang R."/>
            <person name="Berriman M."/>
            <person name="Song J."/>
            <person name="Olsen R."/>
            <person name="Szafranski K."/>
            <person name="Xu Q."/>
            <person name="Tunggal B."/>
            <person name="Kummerfeld S."/>
            <person name="Madera M."/>
            <person name="Konfortov B.A."/>
            <person name="Rivero F."/>
            <person name="Bankier A.T."/>
            <person name="Lehmann R."/>
            <person name="Hamlin N."/>
            <person name="Davies R."/>
            <person name="Gaudet P."/>
            <person name="Fey P."/>
            <person name="Pilcher K."/>
            <person name="Chen G."/>
            <person name="Saunders D."/>
            <person name="Sodergren E.J."/>
            <person name="Davis P."/>
            <person name="Kerhornou A."/>
            <person name="Nie X."/>
            <person name="Hall N."/>
            <person name="Anjard C."/>
            <person name="Hemphill L."/>
            <person name="Bason N."/>
            <person name="Farbrother P."/>
            <person name="Desany B."/>
            <person name="Just E."/>
            <person name="Morio T."/>
            <person name="Rost R."/>
            <person name="Churcher C.M."/>
            <person name="Cooper J."/>
            <person name="Haydock S."/>
            <person name="van Driessche N."/>
            <person name="Cronin A."/>
            <person name="Goodhead I."/>
            <person name="Muzny D.M."/>
            <person name="Mourier T."/>
            <person name="Pain A."/>
            <person name="Lu M."/>
            <person name="Harper D."/>
            <person name="Lindsay R."/>
            <person name="Hauser H."/>
            <person name="James K.D."/>
            <person name="Quiles M."/>
            <person name="Madan Babu M."/>
            <person name="Saito T."/>
            <person name="Buchrieser C."/>
            <person name="Wardroper A."/>
            <person name="Felder M."/>
            <person name="Thangavelu M."/>
            <person name="Johnson D."/>
            <person name="Knights A."/>
            <person name="Loulseged H."/>
            <person name="Mungall K.L."/>
            <person name="Oliver K."/>
            <person name="Price C."/>
            <person name="Quail M.A."/>
            <person name="Urushihara H."/>
            <person name="Hernandez J."/>
            <person name="Rabbinowitsch E."/>
            <person name="Steffen D."/>
            <person name="Sanders M."/>
            <person name="Ma J."/>
            <person name="Kohara Y."/>
            <person name="Sharp S."/>
            <person name="Simmonds M.N."/>
            <person name="Spiegler S."/>
            <person name="Tivey A."/>
            <person name="Sugano S."/>
            <person name="White B."/>
            <person name="Walker D."/>
            <person name="Woodward J.R."/>
            <person name="Winckler T."/>
            <person name="Tanaka Y."/>
            <person name="Shaulsky G."/>
            <person name="Schleicher M."/>
            <person name="Weinstock G.M."/>
            <person name="Rosenthal A."/>
            <person name="Cox E.C."/>
            <person name="Chisholm R.L."/>
            <person name="Gibbs R.A."/>
            <person name="Loomis W.F."/>
            <person name="Platzer M."/>
            <person name="Kay R.R."/>
            <person name="Williams J.G."/>
            <person name="Dear P.H."/>
            <person name="Noegel A.A."/>
            <person name="Barrell B.G."/>
            <person name="Kuspa A."/>
        </authorList>
    </citation>
    <scope>NUCLEOTIDE SEQUENCE [LARGE SCALE GENOMIC DNA]</scope>
    <source>
        <strain>AX4</strain>
    </source>
</reference>
<reference key="3">
    <citation type="journal article" date="2002" name="Plant Physiol.">
        <title>Plant expansins are a complex multigene family with an ancient evolutionary origin.</title>
        <authorList>
            <person name="Li Y."/>
            <person name="Darley C.P."/>
            <person name="Ongaro V."/>
            <person name="Fleming A."/>
            <person name="Schipper O."/>
            <person name="Baldauf S.L."/>
            <person name="McQueen-Mason S.J."/>
        </authorList>
    </citation>
    <scope>FUNCTION</scope>
</reference>
<reference key="4">
    <citation type="journal article" date="2003" name="FEBS Lett.">
        <title>Expression of a family of expansin-like proteins during the development of Dictyostelium discoideum.</title>
        <authorList>
            <person name="Darley C.P."/>
            <person name="Li Y."/>
            <person name="Schaap P."/>
            <person name="McQueen-Mason S.J."/>
        </authorList>
    </citation>
    <scope>DEVELOPMENTAL STAGE</scope>
    <scope>FUNCTION</scope>
</reference>
<reference key="5">
    <citation type="journal article" date="2004" name="Eukaryot. Cell">
        <title>Control of cell type proportioning in Dictyostelium discoideum by differentiation-inducing factor as determined by in situ hybridization.</title>
        <authorList>
            <person name="Maruo T."/>
            <person name="Sakamoto H."/>
            <person name="Iranfar N."/>
            <person name="Fuller D."/>
            <person name="Morio T."/>
            <person name="Urushihara H."/>
            <person name="Tanaka Y."/>
            <person name="Maeda M."/>
            <person name="Loomis W.F."/>
        </authorList>
    </citation>
    <scope>IDENTIFICATION</scope>
</reference>
<reference key="6">
    <citation type="journal article" date="2007" name="Curr. Biol.">
        <title>A G protein-coupled receptor with a lipid kinase domain is involved in cell-density sensing.</title>
        <authorList>
            <person name="Bakthavatsalam D."/>
            <person name="Brazill D."/>
            <person name="Gomer R.H."/>
            <person name="Eichinger L."/>
            <person name="Rivero F."/>
            <person name="Noegel A.A."/>
        </authorList>
    </citation>
    <scope>IDENTIFICATION</scope>
</reference>
<reference key="7">
    <citation type="journal article" date="2007" name="Proc. Natl. Acad. Sci. U.S.A.">
        <title>Global transcriptional responses to cisplatin in Dictyostelium discoideum identify potential drug targets.</title>
        <authorList>
            <person name="Van Driessche N."/>
            <person name="Alexander H."/>
            <person name="Min J."/>
            <person name="Kuspa A."/>
            <person name="Alexander S."/>
            <person name="Shaulsky G."/>
        </authorList>
    </citation>
    <scope>IDENTIFICATION</scope>
</reference>
<comment type="function">
    <text evidence="4 5">May serve to lubricate the movement of the cellulose microfibrils during cell growth and wall extension and/or may serve to maintain the fluid state of the slug cell wall.</text>
</comment>
<comment type="subcellular location">
    <subcellularLocation>
        <location evidence="6">Membrane</location>
        <topology evidence="6">Single-pass type I membrane protein</topology>
    </subcellularLocation>
</comment>
<comment type="developmental stage">
    <text evidence="5">Expressed at substantial levels throughout development with some slight variations.</text>
</comment>
<comment type="similarity">
    <text evidence="6">Belongs to the expansin family. Expansin A subfamily.</text>
</comment>
<accession>Q7KWS2</accession>
<accession>Q551W0</accession>
<organism>
    <name type="scientific">Dictyostelium discoideum</name>
    <name type="common">Social amoeba</name>
    <dbReference type="NCBI Taxonomy" id="44689"/>
    <lineage>
        <taxon>Eukaryota</taxon>
        <taxon>Amoebozoa</taxon>
        <taxon>Evosea</taxon>
        <taxon>Eumycetozoa</taxon>
        <taxon>Dictyostelia</taxon>
        <taxon>Dictyosteliales</taxon>
        <taxon>Dictyosteliaceae</taxon>
        <taxon>Dictyostelium</taxon>
    </lineage>
</organism>
<protein>
    <recommendedName>
        <fullName>Expansin-like protein 3</fullName>
        <shortName>Ddexpl3</shortName>
    </recommendedName>
</protein>
<gene>
    <name type="primary">expl3</name>
    <name type="ORF">DDB_G0276287</name>
</gene>